<feature type="chain" id="PRO_0000220201" description="Long-chain acyl-protein thioester reductase">
    <location>
        <begin position="1"/>
        <end position="479"/>
    </location>
</feature>
<accession>P12748</accession>
<accession>Q9S3Z3</accession>
<keyword id="KW-0455">Luminescence</keyword>
<keyword id="KW-0521">NADP</keyword>
<keyword id="KW-0560">Oxidoreductase</keyword>
<name>LUXC_ALIFS</name>
<protein>
    <recommendedName>
        <fullName evidence="2">Long-chain acyl-protein thioester reductase</fullName>
        <ecNumber evidence="1">1.2.1.50</ecNumber>
    </recommendedName>
    <alternativeName>
        <fullName>Acyl-CoA reductase</fullName>
    </alternativeName>
</protein>
<evidence type="ECO:0000250" key="1">
    <source>
        <dbReference type="UniProtKB" id="P19841"/>
    </source>
</evidence>
<evidence type="ECO:0000305" key="2"/>
<dbReference type="EC" id="1.2.1.50" evidence="1"/>
<dbReference type="EMBL" id="AF170104">
    <property type="protein sequence ID" value="AAD48475.1"/>
    <property type="molecule type" value="Genomic_DNA"/>
</dbReference>
<dbReference type="EMBL" id="M19039">
    <property type="protein sequence ID" value="AAA27553.1"/>
    <property type="molecule type" value="Genomic_DNA"/>
</dbReference>
<dbReference type="EMBL" id="Y00509">
    <property type="protein sequence ID" value="CAA68563.1"/>
    <property type="molecule type" value="Genomic_DNA"/>
</dbReference>
<dbReference type="PIR" id="S06862">
    <property type="entry name" value="S06862"/>
</dbReference>
<dbReference type="SMR" id="P12748"/>
<dbReference type="UniPathway" id="UPA00569"/>
<dbReference type="GO" id="GO:0003995">
    <property type="term" value="F:acyl-CoA dehydrogenase activity"/>
    <property type="evidence" value="ECO:0007669"/>
    <property type="project" value="InterPro"/>
</dbReference>
<dbReference type="GO" id="GO:0050062">
    <property type="term" value="F:long-chain-fatty-acyl-CoA reductase activity"/>
    <property type="evidence" value="ECO:0007669"/>
    <property type="project" value="UniProtKB-EC"/>
</dbReference>
<dbReference type="GO" id="GO:0008218">
    <property type="term" value="P:bioluminescence"/>
    <property type="evidence" value="ECO:0000315"/>
    <property type="project" value="CACAO"/>
</dbReference>
<dbReference type="CDD" id="cd07080">
    <property type="entry name" value="ALDH_Acyl-CoA-Red_LuxC"/>
    <property type="match status" value="1"/>
</dbReference>
<dbReference type="Gene3D" id="3.40.605.10">
    <property type="entry name" value="Aldehyde Dehydrogenase, Chain A, domain 1"/>
    <property type="match status" value="1"/>
</dbReference>
<dbReference type="Gene3D" id="3.40.309.10">
    <property type="entry name" value="Aldehyde Dehydrogenase, Chain A, domain 2"/>
    <property type="match status" value="1"/>
</dbReference>
<dbReference type="InterPro" id="IPR016161">
    <property type="entry name" value="Ald_DH/histidinol_DH"/>
</dbReference>
<dbReference type="InterPro" id="IPR016163">
    <property type="entry name" value="Ald_DH_C"/>
</dbReference>
<dbReference type="InterPro" id="IPR016162">
    <property type="entry name" value="Ald_DH_N"/>
</dbReference>
<dbReference type="InterPro" id="IPR008670">
    <property type="entry name" value="CoA_reduct_LuxC"/>
</dbReference>
<dbReference type="Pfam" id="PF05893">
    <property type="entry name" value="LuxC"/>
    <property type="match status" value="1"/>
</dbReference>
<dbReference type="PIRSF" id="PIRSF009414">
    <property type="entry name" value="LuxC"/>
    <property type="match status" value="1"/>
</dbReference>
<dbReference type="SUPFAM" id="SSF53720">
    <property type="entry name" value="ALDH-like"/>
    <property type="match status" value="1"/>
</dbReference>
<proteinExistence type="inferred from homology"/>
<gene>
    <name type="primary">luxC</name>
</gene>
<reference key="1">
    <citation type="submission" date="1999-07" db="EMBL/GenBank/DDBJ databases">
        <title>Vibrio fischeri Lux operon SalI digest.</title>
        <authorList>
            <person name="Knight T."/>
            <person name="Papadakis N."/>
        </authorList>
    </citation>
    <scope>NUCLEOTIDE SEQUENCE [GENOMIC DNA]</scope>
    <source>
        <strain>MJ-1</strain>
    </source>
</reference>
<reference key="2">
    <citation type="journal article" date="1987" name="Nucleic Acids Res.">
        <title>Nucleotide sequence of the regulatory locus controlling expression of bacterial genes for bioluminescence.</title>
        <authorList>
            <person name="Engebrecht J."/>
            <person name="Silverman M."/>
        </authorList>
    </citation>
    <scope>NUCLEOTIDE SEQUENCE [GENOMIC DNA] OF 1-81</scope>
</reference>
<reference key="3">
    <citation type="journal article" date="1988" name="Biochemistry">
        <title>Nucleotide sequence of the luxR and luxI genes and structure of the primary regulatory region of the lux regulon of Vibrio fischeri ATCC 7744.</title>
        <authorList>
            <person name="Devine J.H."/>
            <person name="Countryman C."/>
            <person name="Baldwin T.O."/>
        </authorList>
    </citation>
    <scope>NUCLEOTIDE SEQUENCE [GENOMIC DNA] OF 1-20</scope>
    <source>
        <strain>ATCC 7744 / DSM 507 / NCIMB 1281 / 398</strain>
    </source>
</reference>
<organism>
    <name type="scientific">Aliivibrio fischeri</name>
    <name type="common">Vibrio fischeri</name>
    <dbReference type="NCBI Taxonomy" id="668"/>
    <lineage>
        <taxon>Bacteria</taxon>
        <taxon>Pseudomonadati</taxon>
        <taxon>Pseudomonadota</taxon>
        <taxon>Gammaproteobacteria</taxon>
        <taxon>Vibrionales</taxon>
        <taxon>Vibrionaceae</taxon>
        <taxon>Aliivibrio</taxon>
    </lineage>
</organism>
<sequence length="479" mass="54578">MNKCIPMIINGMIQDFDNYAYKEVKLNNDNRVKLSVITESSVSKTLNIKDRINLNLNQIVNFLYTVGQRWKSEEYNRRRTYIRELKTYLGYSDEMARLEANWIAMLLCSKSALYDIVNYDLGSIHVLDEWLPRGDCYVKAQPKGVSVHLLAGNVPLSGVTSILRAILTKNECIIKTSSSDPFTANALVSSFIDVNADHPITKSMSVMYWPHDEDMTLSQRIMNHADVVIAWGGDEAIKWAVKYSPPHVDILKFGPKKSLSIIEAPKDIEAAAMGVAHDICFYDQQACFSTQDVYYIGDNLPLFLNELEKQLDRYAKILPKGSNSFDEKAAFTLTEKESLFAGYEVRKGDKQAWLIVVSPTNSFGNQPLSRSVYVHQVSDIKEIIPFVNKNRTQTVSIYPWEASLKYRDKLARSGVERIVESGMNNIFRVGGAHDSLSPLQYLVRFVSHERPFNYTTKDVAVEIEQTRYLEEDKFLVFVP</sequence>
<comment type="function">
    <text evidence="1">LuxC is the fatty acid reductase enzyme responsible for synthesis of the aldehyde substrate for the luminescent reaction catalyzed by luciferase.</text>
</comment>
<comment type="catalytic activity">
    <reaction evidence="1">
        <text>a long-chain fatty aldehyde + NADP(+) + CoA = a long-chain fatty acyl-CoA + NADPH + H(+)</text>
        <dbReference type="Rhea" id="RHEA:15437"/>
        <dbReference type="ChEBI" id="CHEBI:15378"/>
        <dbReference type="ChEBI" id="CHEBI:17176"/>
        <dbReference type="ChEBI" id="CHEBI:57287"/>
        <dbReference type="ChEBI" id="CHEBI:57783"/>
        <dbReference type="ChEBI" id="CHEBI:58349"/>
        <dbReference type="ChEBI" id="CHEBI:83139"/>
        <dbReference type="EC" id="1.2.1.50"/>
    </reaction>
</comment>
<comment type="pathway">
    <text>Lipid metabolism; fatty acid reduction for biolumincescence.</text>
</comment>
<comment type="similarity">
    <text evidence="2">Belongs to the LuxC family.</text>
</comment>